<proteinExistence type="evidence at transcript level"/>
<name>PIN5_ARATH</name>
<reference key="1">
    <citation type="journal article" date="1997" name="DNA Res.">
        <title>Structural analysis of Arabidopsis thaliana chromosome 5. I. Sequence features of the 1.6 Mb regions covered by twenty physically assigned P1 clones.</title>
        <authorList>
            <person name="Sato S."/>
            <person name="Kotani H."/>
            <person name="Nakamura Y."/>
            <person name="Kaneko T."/>
            <person name="Asamizu E."/>
            <person name="Fukami M."/>
            <person name="Miyajima N."/>
            <person name="Tabata S."/>
        </authorList>
    </citation>
    <scope>NUCLEOTIDE SEQUENCE [LARGE SCALE GENOMIC DNA]</scope>
    <source>
        <strain>cv. Columbia</strain>
    </source>
</reference>
<reference key="2">
    <citation type="journal article" date="2017" name="Plant J.">
        <title>Araport11: a complete reannotation of the Arabidopsis thaliana reference genome.</title>
        <authorList>
            <person name="Cheng C.Y."/>
            <person name="Krishnakumar V."/>
            <person name="Chan A.P."/>
            <person name="Thibaud-Nissen F."/>
            <person name="Schobel S."/>
            <person name="Town C.D."/>
        </authorList>
    </citation>
    <scope>GENOME REANNOTATION</scope>
    <source>
        <strain>cv. Columbia</strain>
    </source>
</reference>
<reference key="3">
    <citation type="journal article" date="2005" name="Trends Plant Sci.">
        <title>The PIN auxin efflux facilitators: evolutionary and functional perspectives.</title>
        <authorList>
            <person name="Paponov I.A."/>
            <person name="Teale W.D."/>
            <person name="Trebar M."/>
            <person name="Blilou I."/>
            <person name="Palme K."/>
        </authorList>
    </citation>
    <scope>GENE FAMILY</scope>
    <scope>NOMENCLATURE</scope>
</reference>
<reference key="4">
    <citation type="journal article" date="2009" name="Nature">
        <title>Subcellular homeostasis of phytohormone auxin is mediated by the ER-localized PIN5 transporter.</title>
        <authorList>
            <person name="Mravec J."/>
            <person name="Skupa P."/>
            <person name="Bailly A."/>
            <person name="Hoyerova K."/>
            <person name="Krecek P."/>
            <person name="Bielach A."/>
            <person name="Petrasek J."/>
            <person name="Zhang J."/>
            <person name="Gaykova V."/>
            <person name="Stierhof Y.D."/>
            <person name="Dobrev P.I."/>
            <person name="Schwarzerova K."/>
            <person name="Rolcik J."/>
            <person name="Seifertova D."/>
            <person name="Luschnig C."/>
            <person name="Benkova E."/>
            <person name="Zazimalova E."/>
            <person name="Geisler M."/>
            <person name="Friml J."/>
        </authorList>
    </citation>
    <scope>FUNCTION</scope>
    <scope>SUBCELLULAR LOCATION</scope>
    <scope>TISSUE SPECIFICITY</scope>
    <scope>INDUCTION BY AUXIN</scope>
    <scope>DISRUPTION PHENOTYPE</scope>
</reference>
<reference key="5">
    <citation type="journal article" date="2010" name="Plant Physiol.">
        <title>Differential auxin-transporting activities of PIN-FORMED proteins in Arabidopsis root hair cells.</title>
        <authorList>
            <person name="Ganguly A."/>
            <person name="Lee S.H."/>
            <person name="Cho M."/>
            <person name="Lee O.R."/>
            <person name="Yoo H."/>
            <person name="Cho H.T."/>
        </authorList>
    </citation>
    <scope>SUBCELLULAR LOCATION</scope>
    <scope>FUNCTION</scope>
</reference>
<reference key="6">
    <citation type="journal article" date="2012" name="Nat. Commun.">
        <title>ER-localized auxin transporter PIN8 regulates auxin homeostasis and male gametophyte development in Arabidopsis.</title>
        <authorList>
            <person name="Ding Z."/>
            <person name="Wang B."/>
            <person name="Moreno I."/>
            <person name="Duplakova N."/>
            <person name="Simon S."/>
            <person name="Carraro N."/>
            <person name="Reemmer J."/>
            <person name="Pencik A."/>
            <person name="Chen X."/>
            <person name="Tejos R."/>
            <person name="Skupa P."/>
            <person name="Pollmann S."/>
            <person name="Mravec J."/>
            <person name="Petrasek J."/>
            <person name="Zazimalova E."/>
            <person name="Honys D."/>
            <person name="Rolcik J."/>
            <person name="Murphy A."/>
            <person name="Orellana A."/>
            <person name="Geisler M."/>
            <person name="Friml J."/>
        </authorList>
    </citation>
    <scope>FUNCTION</scope>
</reference>
<reference key="7">
    <citation type="journal article" date="2012" name="Plant Signal. Behav.">
        <title>Intracellular auxin transport in pollen: PIN8, PIN5 and PILS5.</title>
        <authorList>
            <person name="Dal Bosco C."/>
            <person name="Dovzhenko A."/>
            <person name="Palme K."/>
        </authorList>
    </citation>
    <scope>FUNCTION</scope>
</reference>
<reference key="8">
    <citation type="journal article" date="2013" name="PLoS Genet.">
        <title>Patterning of leaf vein networks by convergent auxin transport pathways.</title>
        <authorList>
            <person name="Sawchuk M.G."/>
            <person name="Edgar A."/>
            <person name="Scarpella E."/>
        </authorList>
    </citation>
    <scope>FUNCTION</scope>
</reference>
<reference key="9">
    <citation type="journal article" date="2013" name="Plant Signal. Behav.">
        <title>Control of vein patterning by intracellular auxin transport.</title>
        <authorList>
            <person name="Sawchuk M.G."/>
            <person name="Scarpella E."/>
        </authorList>
    </citation>
    <scope>FUNCTION</scope>
</reference>
<reference key="10">
    <citation type="journal article" date="2014" name="Plant Cell">
        <title>Functional analysis of the hydrophilic loop in intracellular trafficking of Arabidopsis PIN-FORMED proteins.</title>
        <authorList>
            <person name="Ganguly A."/>
            <person name="Park M."/>
            <person name="Kesawat M.S."/>
            <person name="Cho H.T."/>
        </authorList>
    </citation>
    <scope>SUBCELLULAR LOCATION</scope>
    <scope>TISSUE SPECIFICITY</scope>
</reference>
<reference key="11">
    <citation type="journal article" date="2014" name="Plant J.">
        <title>Inter-regulation of the unfolded protein response and auxin signaling.</title>
        <authorList>
            <person name="Chen Y."/>
            <person name="Aung K."/>
            <person name="Rolcik J."/>
            <person name="Walicki K."/>
            <person name="Friml J."/>
            <person name="Brandizzi F."/>
        </authorList>
    </citation>
    <scope>INDUCTION</scope>
    <scope>FUNCTION</scope>
</reference>
<reference key="12">
    <citation type="journal article" date="2015" name="BMC Biol.">
        <title>Control of vein network topology by auxin transport.</title>
        <authorList>
            <person name="Verna C."/>
            <person name="Sawchuk M.G."/>
            <person name="Linh N.M."/>
            <person name="Scarpella E."/>
        </authorList>
    </citation>
    <scope>TISSUE SPECIFICITY</scope>
    <scope>FUNCTION</scope>
</reference>
<evidence type="ECO:0000255" key="1"/>
<evidence type="ECO:0000269" key="2">
    <source>
    </source>
</evidence>
<evidence type="ECO:0000269" key="3">
    <source>
    </source>
</evidence>
<evidence type="ECO:0000269" key="4">
    <source>
    </source>
</evidence>
<evidence type="ECO:0000269" key="5">
    <source>
    </source>
</evidence>
<evidence type="ECO:0000269" key="6">
    <source>
    </source>
</evidence>
<evidence type="ECO:0000269" key="7">
    <source>
    </source>
</evidence>
<evidence type="ECO:0000269" key="8">
    <source>
    </source>
</evidence>
<evidence type="ECO:0000303" key="9">
    <source>
    </source>
</evidence>
<evidence type="ECO:0000305" key="10"/>
<evidence type="ECO:0000305" key="11">
    <source>
    </source>
</evidence>
<evidence type="ECO:0000305" key="12">
    <source>
    </source>
</evidence>
<evidence type="ECO:0000312" key="13">
    <source>
        <dbReference type="Araport" id="AT5G16530"/>
    </source>
</evidence>
<evidence type="ECO:0000312" key="14">
    <source>
        <dbReference type="EMBL" id="BAB09622.1"/>
    </source>
</evidence>
<gene>
    <name evidence="9" type="primary">PIN5</name>
    <name type="synonym">AEH2</name>
    <name type="synonym">PIN8</name>
    <name evidence="13" type="ordered locus">At5g16530</name>
    <name evidence="14" type="ORF">MQK4.28</name>
</gene>
<organism>
    <name type="scientific">Arabidopsis thaliana</name>
    <name type="common">Mouse-ear cress</name>
    <dbReference type="NCBI Taxonomy" id="3702"/>
    <lineage>
        <taxon>Eukaryota</taxon>
        <taxon>Viridiplantae</taxon>
        <taxon>Streptophyta</taxon>
        <taxon>Embryophyta</taxon>
        <taxon>Tracheophyta</taxon>
        <taxon>Spermatophyta</taxon>
        <taxon>Magnoliopsida</taxon>
        <taxon>eudicotyledons</taxon>
        <taxon>Gunneridae</taxon>
        <taxon>Pentapetalae</taxon>
        <taxon>rosids</taxon>
        <taxon>malvids</taxon>
        <taxon>Brassicales</taxon>
        <taxon>Brassicaceae</taxon>
        <taxon>Camelineae</taxon>
        <taxon>Arabidopsis</taxon>
    </lineage>
</organism>
<keyword id="KW-0927">Auxin signaling pathway</keyword>
<keyword id="KW-1003">Cell membrane</keyword>
<keyword id="KW-0256">Endoplasmic reticulum</keyword>
<keyword id="KW-0472">Membrane</keyword>
<keyword id="KW-1185">Reference proteome</keyword>
<keyword id="KW-0812">Transmembrane</keyword>
<keyword id="KW-1133">Transmembrane helix</keyword>
<keyword id="KW-0813">Transport</keyword>
<feature type="chain" id="PRO_0000123787" description="Auxin efflux carrier component 5">
    <location>
        <begin position="1"/>
        <end position="351"/>
    </location>
</feature>
<feature type="transmembrane region" description="Helical" evidence="1">
    <location>
        <begin position="7"/>
        <end position="27"/>
    </location>
</feature>
<feature type="transmembrane region" description="Helical" evidence="1">
    <location>
        <begin position="39"/>
        <end position="59"/>
    </location>
</feature>
<feature type="transmembrane region" description="Helical" evidence="1">
    <location>
        <begin position="71"/>
        <end position="91"/>
    </location>
</feature>
<feature type="transmembrane region" description="Helical" evidence="1">
    <location>
        <begin position="100"/>
        <end position="120"/>
    </location>
</feature>
<feature type="transmembrane region" description="Helical" evidence="1">
    <location>
        <begin position="132"/>
        <end position="152"/>
    </location>
</feature>
<feature type="transmembrane region" description="Helical" evidence="1">
    <location>
        <begin position="210"/>
        <end position="230"/>
    </location>
</feature>
<feature type="transmembrane region" description="Helical" evidence="1">
    <location>
        <begin position="234"/>
        <end position="254"/>
    </location>
</feature>
<feature type="transmembrane region" description="Helical" evidence="1">
    <location>
        <begin position="271"/>
        <end position="291"/>
    </location>
</feature>
<feature type="transmembrane region" description="Helical" evidence="1">
    <location>
        <begin position="295"/>
        <end position="315"/>
    </location>
</feature>
<feature type="transmembrane region" description="Helical" evidence="1">
    <location>
        <begin position="329"/>
        <end position="349"/>
    </location>
</feature>
<accession>Q9FFD0</accession>
<comment type="function">
    <text evidence="2 3 4 5 6 8 11 12">Auxin transporter regulating intracellular auxin homeostasis and metabolism (PubMed:19506555, PubMed:20439545). Mediates the auxin transport from the cytosol into the lumen of the endoplasmic reticulum (PubMed:19506555). May also act as an auxin efflux carrier when located to the cell membrane (PubMed:24692422). PIN5 and PIN8 may have an antagonistic/compensatory activity (PubMed:22760640, PubMed:22990451). Involved in unfolded protein response (UPR) activation (PubMed:24180465). Involved in the control of vein patterning (PubMed:24304505). Promotes vein formation (PubMed:26560462). PIN5, PIN6, and PIN8 control vein network geometry, but they are expressed in mutually exclusive domains of leaf vascular cells (PubMed:26560462).</text>
</comment>
<comment type="subcellular location">
    <subcellularLocation>
        <location evidence="2 3 7">Endoplasmic reticulum membrane</location>
        <topology evidence="10">Multi-pass membrane protein</topology>
    </subcellularLocation>
    <subcellularLocation>
        <location evidence="7">Cell membrane</location>
        <topology evidence="10">Multi-pass membrane protein</topology>
    </subcellularLocation>
    <text evidence="7">Along the root developmental zones, the localization gradually shifted from cell membrane localization in the meristematic epidermal cells to internal localization in the older elongating epidermal cells. Localizes to the cell membrane in the pavement and guard cells of the cotyledon and to internal compartments in the vascular tissues.</text>
</comment>
<comment type="tissue specificity">
    <text evidence="2 7 8">Expressed in elongating parts of hypocotyl, cotyledon vasculature and guard cells (PubMed:19506555, PubMed:24692422). Detected in root pericycle and root tip and at later developmental stages in leaves, stems and flowers (PubMed:19506555, PubMed:24692422). Expressed in veins of mature leaves (PubMed:26560462).</text>
</comment>
<comment type="induction">
    <text evidence="2 5">Down-regulated upon auxin treatment (PubMed:19506555). Down-regulated by endoplasmic reticulum stress treatment (PubMed:24180465).</text>
</comment>
<comment type="disruption phenotype">
    <text evidence="2">Defects in lateral root initiation and in root and hypocotyl growth. Increased levels of endogenous free auxin.</text>
</comment>
<comment type="similarity">
    <text evidence="10">Belongs to the auxin efflux carrier (TC 2.A.69.1) family.</text>
</comment>
<comment type="sequence caution" evidence="10">
    <conflict type="erroneous gene model prediction">
        <sequence resource="EMBL-CDS" id="BAB09622"/>
    </conflict>
</comment>
<protein>
    <recommendedName>
        <fullName evidence="9">Auxin efflux carrier component 5</fullName>
        <shortName evidence="9">AtPIN5</shortName>
    </recommendedName>
</protein>
<dbReference type="EMBL" id="AB005242">
    <property type="protein sequence ID" value="BAB09622.1"/>
    <property type="status" value="ALT_SEQ"/>
    <property type="molecule type" value="Genomic_DNA"/>
</dbReference>
<dbReference type="EMBL" id="CP002688">
    <property type="protein sequence ID" value="AED92305.1"/>
    <property type="molecule type" value="Genomic_DNA"/>
</dbReference>
<dbReference type="RefSeq" id="NP_197157.4">
    <property type="nucleotide sequence ID" value="NM_121659.5"/>
</dbReference>
<dbReference type="SMR" id="Q9FFD0"/>
<dbReference type="BioGRID" id="16791">
    <property type="interactions" value="42"/>
</dbReference>
<dbReference type="IntAct" id="Q9FFD0">
    <property type="interactions" value="42"/>
</dbReference>
<dbReference type="STRING" id="3702.Q9FFD0"/>
<dbReference type="TCDB" id="2.A.69.1.6">
    <property type="family name" value="the auxin efflux carrier (aec) family"/>
</dbReference>
<dbReference type="PaxDb" id="3702-AT5G16530.1"/>
<dbReference type="EnsemblPlants" id="AT5G16530.1">
    <property type="protein sequence ID" value="AT5G16530.1"/>
    <property type="gene ID" value="AT5G16530"/>
</dbReference>
<dbReference type="GeneID" id="831515"/>
<dbReference type="Gramene" id="AT5G16530.1">
    <property type="protein sequence ID" value="AT5G16530.1"/>
    <property type="gene ID" value="AT5G16530"/>
</dbReference>
<dbReference type="KEGG" id="ath:AT5G16530"/>
<dbReference type="Araport" id="AT5G16530"/>
<dbReference type="TAIR" id="AT5G16530">
    <property type="gene designation" value="PIN5"/>
</dbReference>
<dbReference type="eggNOG" id="ENOG502QS1X">
    <property type="taxonomic scope" value="Eukaryota"/>
</dbReference>
<dbReference type="HOGENOM" id="CLU_019285_0_0_1"/>
<dbReference type="InParanoid" id="Q9FFD0"/>
<dbReference type="OMA" id="YYAVLEF"/>
<dbReference type="OrthoDB" id="2133778at2759"/>
<dbReference type="PhylomeDB" id="Q9FFD0"/>
<dbReference type="PRO" id="PR:Q9FFD0"/>
<dbReference type="Proteomes" id="UP000006548">
    <property type="component" value="Chromosome 5"/>
</dbReference>
<dbReference type="ExpressionAtlas" id="Q9FFD0">
    <property type="expression patterns" value="baseline and differential"/>
</dbReference>
<dbReference type="GO" id="GO:0071944">
    <property type="term" value="C:cell periphery"/>
    <property type="evidence" value="ECO:0000250"/>
    <property type="project" value="UniProtKB"/>
</dbReference>
<dbReference type="GO" id="GO:0005783">
    <property type="term" value="C:endoplasmic reticulum"/>
    <property type="evidence" value="ECO:0000314"/>
    <property type="project" value="TAIR"/>
</dbReference>
<dbReference type="GO" id="GO:0005789">
    <property type="term" value="C:endoplasmic reticulum membrane"/>
    <property type="evidence" value="ECO:0007669"/>
    <property type="project" value="UniProtKB-SubCell"/>
</dbReference>
<dbReference type="GO" id="GO:0005886">
    <property type="term" value="C:plasma membrane"/>
    <property type="evidence" value="ECO:0000250"/>
    <property type="project" value="UniProtKB"/>
</dbReference>
<dbReference type="GO" id="GO:0010329">
    <property type="term" value="F:auxin efflux transmembrane transporter activity"/>
    <property type="evidence" value="ECO:0000250"/>
    <property type="project" value="UniProtKB"/>
</dbReference>
<dbReference type="GO" id="GO:0080161">
    <property type="term" value="F:auxin transmembrane transporter activity"/>
    <property type="evidence" value="ECO:0000314"/>
    <property type="project" value="TAIR"/>
</dbReference>
<dbReference type="GO" id="GO:0042802">
    <property type="term" value="F:identical protein binding"/>
    <property type="evidence" value="ECO:0000250"/>
    <property type="project" value="UniProtKB"/>
</dbReference>
<dbReference type="GO" id="GO:0042803">
    <property type="term" value="F:protein homodimerization activity"/>
    <property type="evidence" value="ECO:0000250"/>
    <property type="project" value="UniProtKB"/>
</dbReference>
<dbReference type="GO" id="GO:0010315">
    <property type="term" value="P:auxin export across the plasma membrane"/>
    <property type="evidence" value="ECO:0000250"/>
    <property type="project" value="UniProtKB"/>
</dbReference>
<dbReference type="GO" id="GO:0009734">
    <property type="term" value="P:auxin-activated signaling pathway"/>
    <property type="evidence" value="ECO:0007669"/>
    <property type="project" value="UniProtKB-KW"/>
</dbReference>
<dbReference type="GO" id="GO:0080162">
    <property type="term" value="P:endoplasmic reticulum to cytosol auxin transport"/>
    <property type="evidence" value="ECO:0000314"/>
    <property type="project" value="TAIR"/>
</dbReference>
<dbReference type="GO" id="GO:0009555">
    <property type="term" value="P:pollen development"/>
    <property type="evidence" value="ECO:0000315"/>
    <property type="project" value="TAIR"/>
</dbReference>
<dbReference type="InterPro" id="IPR014024">
    <property type="entry name" value="Auxin_eff_plant"/>
</dbReference>
<dbReference type="InterPro" id="IPR051107">
    <property type="entry name" value="Auxin_Efflux_Carrier"/>
</dbReference>
<dbReference type="InterPro" id="IPR004776">
    <property type="entry name" value="Mem_transp_PIN-like"/>
</dbReference>
<dbReference type="NCBIfam" id="TIGR00946">
    <property type="entry name" value="2a69"/>
    <property type="match status" value="1"/>
</dbReference>
<dbReference type="PANTHER" id="PTHR31752">
    <property type="entry name" value="AUXIN EFFLUX CARRIER COMPONENT 1B-RELATED"/>
    <property type="match status" value="1"/>
</dbReference>
<dbReference type="PANTHER" id="PTHR31752:SF2">
    <property type="entry name" value="AUXIN EFFLUX CARRIER COMPONENT 5"/>
    <property type="match status" value="1"/>
</dbReference>
<dbReference type="Pfam" id="PF03547">
    <property type="entry name" value="Mem_trans"/>
    <property type="match status" value="1"/>
</dbReference>
<sequence>MINCGDVYKVIEAMVPLYVALILGYGSVKWWHIFTRDQCDAINRLVCYFTLPLFTIEFTAHVDPFNMNYRFIAADVLSKVIIVTVLALWAKYSNKGSYCWSITSFSLCTLTNSLVVGVPLAKAMYGQQAVDLVVQSSVFQAIVWLTLLLFVLEFRKAGFSSNNISDVQVDNINIESGKRETVVVGEKSFLEVMSLVWLKLATNPNCYSCILGIAWAFISNRWHLELPGILEGSILIMSKAGTGTAMFNMGIFMALQEKLIVCGTSLTVMGMVLKFIAGPAAMAIGSIVLGLHGDVLRVAIIQAALPQSITSFIFAKEYGLHADVLSTAVIFGMLVSLPVLVAYYAALEFIH</sequence>